<proteinExistence type="evidence at protein level"/>
<sequence length="504" mass="56872">MAARRANCALVLVLALALLAARDAGAAAVPKPNWLGGLSRAAFPKRFVFGTATSAYQVEGMAASGGRGPSIWDAFAHTPGNVAGNQNGDVATDQYHRYKEDVNLMKSLNFDAYRFSISWSRIFPDGEGRVNQEGVAYYNNLINYLLQKGITPYVNLYHYDLPLALEKKYGGWLNAKMADLFTEYADFCFKTFGNRVKHWFTFNEPRIVALLGYDQGTNPPKRCTKCAAGGNSATEPYIVAHNFLLSHAAAVARYRTKYQAAQQGKVGIVLDFNWYEALSNSTEDQAAAQRARDFHIGWYLDPLINGHYPQIMQDLVKDRLPKFTPEQARLVKGSADYIGINQYTASYMKGQQLMQQTPTSYSADWQVTYVFAKNGKPIGPQANSNWLYIVPWGMYGCVNYIKQKYGNPTVVITENGMDQPANLSRDQYLRDTTRVHFYRSYLTQLKKAIDEGANVAGYFAWSLLDNFEWLSGYTSKFGIVYVDFNTLERHPKASAYWFRDMLKH</sequence>
<gene>
    <name evidence="13" type="primary">BGLU7</name>
    <name evidence="11" type="synonym">BGLU1</name>
    <name evidence="18" type="ordered locus">Os03g0703000</name>
    <name evidence="17" type="ordered locus">LOC_Os03g49600</name>
    <name type="ORF">OSJNBa0004L11.16</name>
</gene>
<feature type="signal peptide" evidence="3">
    <location>
        <begin position="1"/>
        <end position="26"/>
    </location>
</feature>
<feature type="chain" id="PRO_0000383461" description="Beta-glucosidase 7">
    <location>
        <begin position="27"/>
        <end position="504"/>
    </location>
</feature>
<feature type="active site" description="Proton donor" evidence="10">
    <location>
        <position position="204"/>
    </location>
</feature>
<feature type="active site" description="Nucleophile" evidence="10">
    <location>
        <position position="414"/>
    </location>
</feature>
<feature type="binding site" evidence="14 15 16 20 21 24 25 26 38">
    <location>
        <position position="57"/>
    </location>
    <ligand>
        <name>a beta-D-glucoside</name>
        <dbReference type="ChEBI" id="CHEBI:22798"/>
    </ligand>
</feature>
<feature type="binding site" evidence="15 16 21 24 25 26 38">
    <location>
        <position position="158"/>
    </location>
    <ligand>
        <name>a beta-D-glucoside</name>
        <dbReference type="ChEBI" id="CHEBI:22798"/>
    </ligand>
</feature>
<feature type="binding site" evidence="14 15 16 20 25 26 38">
    <location>
        <begin position="203"/>
        <end position="204"/>
    </location>
    <ligand>
        <name>a beta-D-glucoside</name>
        <dbReference type="ChEBI" id="CHEBI:22798"/>
    </ligand>
</feature>
<feature type="binding site" evidence="14 15 16 20 21 25 26 38">
    <location>
        <position position="343"/>
    </location>
    <ligand>
        <name>a beta-D-glucoside</name>
        <dbReference type="ChEBI" id="CHEBI:22798"/>
    </ligand>
</feature>
<feature type="binding site" evidence="2">
    <location>
        <position position="414"/>
    </location>
    <ligand>
        <name>a beta-D-glucoside</name>
        <dbReference type="ChEBI" id="CHEBI:22798"/>
    </ligand>
</feature>
<feature type="binding site" evidence="13 36">
    <location>
        <position position="461"/>
    </location>
    <ligand>
        <name>a beta-D-glucoside</name>
        <dbReference type="ChEBI" id="CHEBI:22798"/>
    </ligand>
</feature>
<feature type="binding site" evidence="14 15 16 20 21 24 25 26 38">
    <location>
        <begin position="468"/>
        <end position="469"/>
    </location>
    <ligand>
        <name>a beta-D-glucoside</name>
        <dbReference type="ChEBI" id="CHEBI:22798"/>
    </ligand>
</feature>
<feature type="binding site" evidence="1">
    <location>
        <position position="477"/>
    </location>
    <ligand>
        <name>a beta-D-glucoside</name>
        <dbReference type="ChEBI" id="CHEBI:22798"/>
    </ligand>
</feature>
<feature type="glycosylation site" description="N-linked (GlcNAc...) asparagine" evidence="4">
    <location>
        <position position="280"/>
    </location>
</feature>
<feature type="glycosylation site" description="N-linked (GlcNAc...) asparagine" evidence="4">
    <location>
        <position position="422"/>
    </location>
</feature>
<feature type="disulfide bond" evidence="6 8 10 19 20 21 22 23 24 25 26 27 28 29 30 31 32 33 34 35 36 37 38 39 40">
    <location>
        <begin position="223"/>
        <end position="226"/>
    </location>
</feature>
<feature type="mutagenesis site" description="Increases KM for substrate about 5-fold. Increases kcat/Km values 9 to 24-fold depending on the substrate." evidence="6 9">
    <original>I</original>
    <variation>V</variation>
    <location>
        <position position="207"/>
    </location>
</feature>
<feature type="mutagenesis site" description="Decreases KM for substrate about 2-fold." evidence="6">
    <original>N</original>
    <variation>H</variation>
    <location>
        <position position="218"/>
    </location>
</feature>
<feature type="mutagenesis site" description="Increases KM for substrate about 5-fold." evidence="6">
    <original>N</original>
    <variation>V</variation>
    <location>
        <position position="273"/>
    </location>
</feature>
<feature type="mutagenesis site" description="No effect on KM." evidence="6">
    <original>L</original>
    <variation>R</variation>
    <location>
        <position position="470"/>
    </location>
</feature>
<feature type="sequence conflict" description="In Ref. 1; AAA84906." evidence="13" ref="1">
    <original>A</original>
    <variation>V</variation>
    <location>
        <position position="52"/>
    </location>
</feature>
<feature type="turn" evidence="41">
    <location>
        <begin position="34"/>
        <end position="37"/>
    </location>
</feature>
<feature type="helix" evidence="41">
    <location>
        <begin position="40"/>
        <end position="42"/>
    </location>
</feature>
<feature type="strand" evidence="41">
    <location>
        <begin position="48"/>
        <end position="52"/>
    </location>
</feature>
<feature type="helix" evidence="41">
    <location>
        <begin position="55"/>
        <end position="58"/>
    </location>
</feature>
<feature type="helix" evidence="41">
    <location>
        <begin position="71"/>
        <end position="76"/>
    </location>
</feature>
<feature type="helix" evidence="41">
    <location>
        <begin position="83"/>
        <end position="85"/>
    </location>
</feature>
<feature type="strand" evidence="41">
    <location>
        <begin position="88"/>
        <end position="90"/>
    </location>
</feature>
<feature type="helix" evidence="41">
    <location>
        <begin position="94"/>
        <end position="107"/>
    </location>
</feature>
<feature type="strand" evidence="41">
    <location>
        <begin position="112"/>
        <end position="116"/>
    </location>
</feature>
<feature type="helix" evidence="41">
    <location>
        <begin position="119"/>
        <end position="122"/>
    </location>
</feature>
<feature type="strand" evidence="41">
    <location>
        <begin position="126"/>
        <end position="128"/>
    </location>
</feature>
<feature type="helix" evidence="41">
    <location>
        <begin position="132"/>
        <end position="147"/>
    </location>
</feature>
<feature type="strand" evidence="41">
    <location>
        <begin position="151"/>
        <end position="156"/>
    </location>
</feature>
<feature type="helix" evidence="41">
    <location>
        <begin position="163"/>
        <end position="169"/>
    </location>
</feature>
<feature type="helix" evidence="41">
    <location>
        <begin position="171"/>
        <end position="173"/>
    </location>
</feature>
<feature type="helix" evidence="41">
    <location>
        <begin position="177"/>
        <end position="192"/>
    </location>
</feature>
<feature type="turn" evidence="41">
    <location>
        <begin position="193"/>
        <end position="195"/>
    </location>
</feature>
<feature type="strand" evidence="41">
    <location>
        <begin position="198"/>
        <end position="203"/>
    </location>
</feature>
<feature type="helix" evidence="41">
    <location>
        <begin position="205"/>
        <end position="213"/>
    </location>
</feature>
<feature type="strand" evidence="42">
    <location>
        <begin position="223"/>
        <end position="225"/>
    </location>
</feature>
<feature type="turn" evidence="41">
    <location>
        <begin position="232"/>
        <end position="234"/>
    </location>
</feature>
<feature type="helix" evidence="41">
    <location>
        <begin position="235"/>
        <end position="257"/>
    </location>
</feature>
<feature type="helix" evidence="41">
    <location>
        <begin position="259"/>
        <end position="262"/>
    </location>
</feature>
<feature type="strand" evidence="41">
    <location>
        <begin position="265"/>
        <end position="271"/>
    </location>
</feature>
<feature type="strand" evidence="41">
    <location>
        <begin position="274"/>
        <end position="281"/>
    </location>
</feature>
<feature type="helix" evidence="41">
    <location>
        <begin position="282"/>
        <end position="295"/>
    </location>
</feature>
<feature type="helix" evidence="41">
    <location>
        <begin position="297"/>
        <end position="305"/>
    </location>
</feature>
<feature type="helix" evidence="41">
    <location>
        <begin position="310"/>
        <end position="316"/>
    </location>
</feature>
<feature type="helix" evidence="41">
    <location>
        <begin position="317"/>
        <end position="319"/>
    </location>
</feature>
<feature type="helix" evidence="41">
    <location>
        <begin position="325"/>
        <end position="331"/>
    </location>
</feature>
<feature type="strand" evidence="41">
    <location>
        <begin position="336"/>
        <end position="341"/>
    </location>
</feature>
<feature type="strand" evidence="41">
    <location>
        <begin position="345"/>
        <end position="349"/>
    </location>
</feature>
<feature type="helix" evidence="41">
    <location>
        <begin position="361"/>
        <end position="364"/>
    </location>
</feature>
<feature type="strand" evidence="41">
    <location>
        <begin position="368"/>
        <end position="373"/>
    </location>
</feature>
<feature type="strand" evidence="41">
    <location>
        <begin position="376"/>
        <end position="379"/>
    </location>
</feature>
<feature type="helix" evidence="41">
    <location>
        <begin position="392"/>
        <end position="404"/>
    </location>
</feature>
<feature type="strand" evidence="41">
    <location>
        <begin position="410"/>
        <end position="414"/>
    </location>
</feature>
<feature type="strand" evidence="41">
    <location>
        <begin position="419"/>
        <end position="422"/>
    </location>
</feature>
<feature type="helix" evidence="41">
    <location>
        <begin position="425"/>
        <end position="429"/>
    </location>
</feature>
<feature type="helix" evidence="41">
    <location>
        <begin position="432"/>
        <end position="450"/>
    </location>
</feature>
<feature type="strand" evidence="41">
    <location>
        <begin position="455"/>
        <end position="461"/>
    </location>
</feature>
<feature type="helix" evidence="41">
    <location>
        <begin position="469"/>
        <end position="474"/>
    </location>
</feature>
<feature type="strand" evidence="41">
    <location>
        <begin position="479"/>
        <end position="482"/>
    </location>
</feature>
<feature type="turn" evidence="41">
    <location>
        <begin position="484"/>
        <end position="486"/>
    </location>
</feature>
<feature type="strand" evidence="41">
    <location>
        <begin position="489"/>
        <end position="491"/>
    </location>
</feature>
<feature type="helix" evidence="41">
    <location>
        <begin position="493"/>
        <end position="501"/>
    </location>
</feature>
<name>BGL07_ORYSJ</name>
<reference key="1">
    <citation type="submission" date="2006-08" db="EMBL/GenBank/DDBJ databases">
        <title>Oryza sativa beta-glucosidase mRNA.</title>
        <authorList>
            <person name="Esen A."/>
            <person name="Opassiri R."/>
            <person name="Ketudat Cairns J.R."/>
            <person name="Akiyama T."/>
        </authorList>
    </citation>
    <scope>NUCLEOTIDE SEQUENCE [MRNA]</scope>
    <source>
        <strain>cv. Nipponbare</strain>
        <tissue>Root</tissue>
    </source>
</reference>
<reference key="2">
    <citation type="journal article" date="2005" name="Genome Res.">
        <title>Sequence, annotation, and analysis of synteny between rice chromosome 3 and diverged grass species.</title>
        <authorList>
            <consortium name="The rice chromosome 3 sequencing consortium"/>
            <person name="Buell C.R."/>
            <person name="Yuan Q."/>
            <person name="Ouyang S."/>
            <person name="Liu J."/>
            <person name="Zhu W."/>
            <person name="Wang A."/>
            <person name="Maiti R."/>
            <person name="Haas B."/>
            <person name="Wortman J."/>
            <person name="Pertea M."/>
            <person name="Jones K.M."/>
            <person name="Kim M."/>
            <person name="Overton L."/>
            <person name="Tsitrin T."/>
            <person name="Fadrosh D."/>
            <person name="Bera J."/>
            <person name="Weaver B."/>
            <person name="Jin S."/>
            <person name="Johri S."/>
            <person name="Reardon M."/>
            <person name="Webb K."/>
            <person name="Hill J."/>
            <person name="Moffat K."/>
            <person name="Tallon L."/>
            <person name="Van Aken S."/>
            <person name="Lewis M."/>
            <person name="Utterback T."/>
            <person name="Feldblyum T."/>
            <person name="Zismann V."/>
            <person name="Iobst S."/>
            <person name="Hsiao J."/>
            <person name="de Vazeille A.R."/>
            <person name="Salzberg S.L."/>
            <person name="White O."/>
            <person name="Fraser C.M."/>
            <person name="Yu Y."/>
            <person name="Kim H."/>
            <person name="Rambo T."/>
            <person name="Currie J."/>
            <person name="Collura K."/>
            <person name="Kernodle-Thompson S."/>
            <person name="Wei F."/>
            <person name="Kudrna K."/>
            <person name="Ammiraju J.S.S."/>
            <person name="Luo M."/>
            <person name="Goicoechea J.L."/>
            <person name="Wing R.A."/>
            <person name="Henry D."/>
            <person name="Oates R."/>
            <person name="Palmer M."/>
            <person name="Pries G."/>
            <person name="Saski C."/>
            <person name="Simmons J."/>
            <person name="Soderlund C."/>
            <person name="Nelson W."/>
            <person name="de la Bastide M."/>
            <person name="Spiegel L."/>
            <person name="Nascimento L."/>
            <person name="Huang E."/>
            <person name="Preston R."/>
            <person name="Zutavern T."/>
            <person name="Palmer L."/>
            <person name="O'Shaughnessy A."/>
            <person name="Dike S."/>
            <person name="McCombie W.R."/>
            <person name="Minx P."/>
            <person name="Cordum H."/>
            <person name="Wilson R."/>
            <person name="Jin W."/>
            <person name="Lee H.R."/>
            <person name="Jiang J."/>
            <person name="Jackson S."/>
        </authorList>
    </citation>
    <scope>NUCLEOTIDE SEQUENCE [LARGE SCALE GENOMIC DNA]</scope>
    <source>
        <strain>cv. Nipponbare</strain>
    </source>
</reference>
<reference key="3">
    <citation type="journal article" date="2005" name="Nature">
        <title>The map-based sequence of the rice genome.</title>
        <authorList>
            <consortium name="International rice genome sequencing project (IRGSP)"/>
        </authorList>
    </citation>
    <scope>NUCLEOTIDE SEQUENCE [LARGE SCALE GENOMIC DNA]</scope>
    <source>
        <strain>cv. Nipponbare</strain>
    </source>
</reference>
<reference key="4">
    <citation type="journal article" date="2008" name="Nucleic Acids Res.">
        <title>The rice annotation project database (RAP-DB): 2008 update.</title>
        <authorList>
            <consortium name="The rice annotation project (RAP)"/>
        </authorList>
    </citation>
    <scope>GENOME REANNOTATION</scope>
    <source>
        <strain>cv. Nipponbare</strain>
    </source>
</reference>
<reference key="5">
    <citation type="journal article" date="2013" name="Rice">
        <title>Improvement of the Oryza sativa Nipponbare reference genome using next generation sequence and optical map data.</title>
        <authorList>
            <person name="Kawahara Y."/>
            <person name="de la Bastide M."/>
            <person name="Hamilton J.P."/>
            <person name="Kanamori H."/>
            <person name="McCombie W.R."/>
            <person name="Ouyang S."/>
            <person name="Schwartz D.C."/>
            <person name="Tanaka T."/>
            <person name="Wu J."/>
            <person name="Zhou S."/>
            <person name="Childs K.L."/>
            <person name="Davidson R.M."/>
            <person name="Lin H."/>
            <person name="Quesada-Ocampo L."/>
            <person name="Vaillancourt B."/>
            <person name="Sakai H."/>
            <person name="Lee S.S."/>
            <person name="Kim J."/>
            <person name="Numa H."/>
            <person name="Itoh T."/>
            <person name="Buell C.R."/>
            <person name="Matsumoto T."/>
        </authorList>
    </citation>
    <scope>GENOME REANNOTATION</scope>
    <source>
        <strain>cv. Nipponbare</strain>
    </source>
</reference>
<reference key="6">
    <citation type="journal article" date="2003" name="Science">
        <title>Collection, mapping, and annotation of over 28,000 cDNA clones from japonica rice.</title>
        <authorList>
            <consortium name="The rice full-length cDNA consortium"/>
        </authorList>
    </citation>
    <scope>NUCLEOTIDE SEQUENCE [LARGE SCALE MRNA]</scope>
    <source>
        <strain>cv. Nipponbare</strain>
    </source>
</reference>
<reference key="7">
    <citation type="journal article" date="2004" name="Biochem. J.">
        <title>Beta-glucosidase, exo-beta-glucanase and pyridoxine transglucosylase activities of rice BGlu1.</title>
        <authorList>
            <person name="Opassiri R."/>
            <person name="Hua Y."/>
            <person name="Wara-Aswapati O."/>
            <person name="Akiyama T."/>
            <person name="Svasti J."/>
            <person name="Esen A."/>
            <person name="Ketudat Cairns J.R."/>
        </authorList>
    </citation>
    <scope>FUNCTION</scope>
    <scope>CATALYTIC ACTIVITY</scope>
    <scope>BIOPHYSICOCHEMICAL PROPERTIES</scope>
</reference>
<reference key="8">
    <citation type="journal article" date="2006" name="BMC Plant Biol.">
        <title>Analysis of rice glycosyl hydrolase family 1 and expression of Os4bglu12 beta-glucosidase.</title>
        <authorList>
            <person name="Opassiri R."/>
            <person name="Pomthong B."/>
            <person name="Onkoksoong T."/>
            <person name="Akiyama T."/>
            <person name="Esen A."/>
            <person name="Ketudat Cairns J.R."/>
        </authorList>
    </citation>
    <scope>GENE FAMILY</scope>
    <scope>NOMENCLATURE</scope>
</reference>
<reference key="9">
    <citation type="journal article" date="2009" name="Arch. Biochem. Biophys.">
        <title>Rice family GH1 glycoside hydrolases with beta-D-glucosidase and beta-D-mannosidase activities.</title>
        <authorList>
            <person name="Kuntothom T."/>
            <person name="Luang S."/>
            <person name="Harvey A.J."/>
            <person name="Fincher G.B."/>
            <person name="Opassiri R."/>
            <person name="Hrmova M."/>
            <person name="Ketudat Cairns J.R."/>
        </authorList>
    </citation>
    <scope>FUNCTION</scope>
    <scope>BIOPHYSICOCHEMICAL PROPERTIES</scope>
</reference>
<reference key="10">
    <citation type="journal article" date="2012" name="Carbohydr. Res.">
        <title>Exchanging a single amino acid residue generates or weakens a +2 cellooligosaccharide binding subsite in rice beta-glucosidases.</title>
        <authorList>
            <person name="Sansenya S."/>
            <person name="Maneesan J."/>
            <person name="Cairns J.R."/>
        </authorList>
    </citation>
    <scope>MUTAGENESIS OF ASN-273</scope>
</reference>
<reference key="11">
    <citation type="journal article" date="2008" name="J. Mol. Biol.">
        <title>Structural insights into rice BGlu1 beta-glucosidase oligosaccharide hydrolysis and transglycosylation.</title>
        <authorList>
            <person name="Chuenchor W."/>
            <person name="Pengthaisong S."/>
            <person name="Robinson R.C."/>
            <person name="Yuvaniyama J."/>
            <person name="Oonanant W."/>
            <person name="Bevan D.R."/>
            <person name="Esen A."/>
            <person name="Chen C.J."/>
            <person name="Opassiri R."/>
            <person name="Svasti J."/>
            <person name="Cairns J.R."/>
        </authorList>
    </citation>
    <scope>X-RAY CRYSTALLOGRAPHY (1.55 ANGSTROMS) OF 29-504 IN COMPLEX WITH SUBSTRATE ANALOG</scope>
    <scope>FUNCTION</scope>
    <scope>BIOPHYSICOCHEMICAL PROPERTIES</scope>
    <scope>SUBUNIT</scope>
    <scope>MUTAGENESIS OF ILE-207; ASN-218; ASN-273 AND LEU-470</scope>
    <scope>DISULFIDE BONDS</scope>
</reference>
<reference key="12">
    <citation type="journal article" date="2011" name="J. Struct. Biol.">
        <title>The structural basis of oligosaccharide binding by rice BGlu1 beta-glucosidase.</title>
        <authorList>
            <person name="Chuenchor W."/>
            <person name="Pengthaisong S."/>
            <person name="Robinson R.C."/>
            <person name="Yuvaniyama J."/>
            <person name="Svasti J."/>
            <person name="Cairns J.R."/>
        </authorList>
    </citation>
    <scope>X-RAY CRYSTALLOGRAPHY (1.37 ANGSTROMS) OF 29-504 IN COMPLEX WITH SUBSTRATE ANALOG</scope>
    <scope>DISULFIDE BONDS</scope>
</reference>
<reference key="13">
    <citation type="journal article" date="2014" name="Protein Sci.">
        <title>Effects of active site cleft residues on oligosaccharide binding, hydrolysis, and glycosynthase activities of rice BGlu1 and its mutants.</title>
        <authorList>
            <person name="Pengthaisong S."/>
            <person name="Ketudat Cairns J.R."/>
        </authorList>
    </citation>
    <scope>X-RAY CRYSTALLOGRAPHY (1.83 ANGSTROMS) OF 29-504 IN COMPLEX WITH SUBSTRATE ANALOG</scope>
    <scope>ACTIVE SITE</scope>
    <scope>DISULFIDE BONDS</scope>
</reference>
<organism>
    <name type="scientific">Oryza sativa subsp. japonica</name>
    <name type="common">Rice</name>
    <dbReference type="NCBI Taxonomy" id="39947"/>
    <lineage>
        <taxon>Eukaryota</taxon>
        <taxon>Viridiplantae</taxon>
        <taxon>Streptophyta</taxon>
        <taxon>Embryophyta</taxon>
        <taxon>Tracheophyta</taxon>
        <taxon>Spermatophyta</taxon>
        <taxon>Magnoliopsida</taxon>
        <taxon>Liliopsida</taxon>
        <taxon>Poales</taxon>
        <taxon>Poaceae</taxon>
        <taxon>BOP clade</taxon>
        <taxon>Oryzoideae</taxon>
        <taxon>Oryzeae</taxon>
        <taxon>Oryzinae</taxon>
        <taxon>Oryza</taxon>
        <taxon>Oryza sativa</taxon>
    </lineage>
</organism>
<protein>
    <recommendedName>
        <fullName evidence="13">Beta-glucosidase 7</fullName>
        <shortName evidence="12">Os3bglu7</shortName>
        <ecNumber evidence="5">3.2.1.21</ecNumber>
    </recommendedName>
</protein>
<accession>Q75I93</accession>
<accession>Q10EB0</accession>
<accession>Q10EB1</accession>
<accession>Q10EB2</accession>
<accession>Q42975</accession>
<accession>Q75I92</accession>
<keyword id="KW-0002">3D-structure</keyword>
<keyword id="KW-1015">Disulfide bond</keyword>
<keyword id="KW-0325">Glycoprotein</keyword>
<keyword id="KW-0326">Glycosidase</keyword>
<keyword id="KW-0378">Hydrolase</keyword>
<keyword id="KW-1185">Reference proteome</keyword>
<keyword id="KW-0964">Secreted</keyword>
<keyword id="KW-0732">Signal</keyword>
<evidence type="ECO:0000250" key="1">
    <source>
        <dbReference type="UniProtKB" id="Q1XH05"/>
    </source>
</evidence>
<evidence type="ECO:0000250" key="2">
    <source>
        <dbReference type="UniProtKB" id="Q9SPP9"/>
    </source>
</evidence>
<evidence type="ECO:0000255" key="3"/>
<evidence type="ECO:0000255" key="4">
    <source>
        <dbReference type="PROSITE-ProRule" id="PRU00498"/>
    </source>
</evidence>
<evidence type="ECO:0000269" key="5">
    <source>
    </source>
</evidence>
<evidence type="ECO:0000269" key="6">
    <source>
    </source>
</evidence>
<evidence type="ECO:0000269" key="7">
    <source>
    </source>
</evidence>
<evidence type="ECO:0000269" key="8">
    <source>
    </source>
</evidence>
<evidence type="ECO:0000269" key="9">
    <source>
    </source>
</evidence>
<evidence type="ECO:0000269" key="10">
    <source>
    </source>
</evidence>
<evidence type="ECO:0000303" key="11">
    <source>
    </source>
</evidence>
<evidence type="ECO:0000303" key="12">
    <source>
    </source>
</evidence>
<evidence type="ECO:0000305" key="13"/>
<evidence type="ECO:0000305" key="14">
    <source>
    </source>
</evidence>
<evidence type="ECO:0000305" key="15">
    <source>
    </source>
</evidence>
<evidence type="ECO:0000305" key="16">
    <source>
    </source>
</evidence>
<evidence type="ECO:0000312" key="17">
    <source>
        <dbReference type="EMBL" id="ABF98423.1"/>
    </source>
</evidence>
<evidence type="ECO:0000312" key="18">
    <source>
        <dbReference type="EMBL" id="BAF12927.1"/>
    </source>
</evidence>
<evidence type="ECO:0007744" key="19">
    <source>
        <dbReference type="PDB" id="2RGL"/>
    </source>
</evidence>
<evidence type="ECO:0007744" key="20">
    <source>
        <dbReference type="PDB" id="2RGM"/>
    </source>
</evidence>
<evidence type="ECO:0007744" key="21">
    <source>
        <dbReference type="PDB" id="3AHT"/>
    </source>
</evidence>
<evidence type="ECO:0007744" key="22">
    <source>
        <dbReference type="PDB" id="3AHV"/>
    </source>
</evidence>
<evidence type="ECO:0007744" key="23">
    <source>
        <dbReference type="PDB" id="3F4V"/>
    </source>
</evidence>
<evidence type="ECO:0007744" key="24">
    <source>
        <dbReference type="PDB" id="3F5J"/>
    </source>
</evidence>
<evidence type="ECO:0007744" key="25">
    <source>
        <dbReference type="PDB" id="3F5K"/>
    </source>
</evidence>
<evidence type="ECO:0007744" key="26">
    <source>
        <dbReference type="PDB" id="3F5L"/>
    </source>
</evidence>
<evidence type="ECO:0007744" key="27">
    <source>
        <dbReference type="PDB" id="3SCN"/>
    </source>
</evidence>
<evidence type="ECO:0007744" key="28">
    <source>
        <dbReference type="PDB" id="3SCO"/>
    </source>
</evidence>
<evidence type="ECO:0007744" key="29">
    <source>
        <dbReference type="PDB" id="3SCP"/>
    </source>
</evidence>
<evidence type="ECO:0007744" key="30">
    <source>
        <dbReference type="PDB" id="3SCQ"/>
    </source>
</evidence>
<evidence type="ECO:0007744" key="31">
    <source>
        <dbReference type="PDB" id="3SCR"/>
    </source>
</evidence>
<evidence type="ECO:0007744" key="32">
    <source>
        <dbReference type="PDB" id="3SCS"/>
    </source>
</evidence>
<evidence type="ECO:0007744" key="33">
    <source>
        <dbReference type="PDB" id="3SCT"/>
    </source>
</evidence>
<evidence type="ECO:0007744" key="34">
    <source>
        <dbReference type="PDB" id="3SCU"/>
    </source>
</evidence>
<evidence type="ECO:0007744" key="35">
    <source>
        <dbReference type="PDB" id="3SCV"/>
    </source>
</evidence>
<evidence type="ECO:0007744" key="36">
    <source>
        <dbReference type="PDB" id="3SCW"/>
    </source>
</evidence>
<evidence type="ECO:0007744" key="37">
    <source>
        <dbReference type="PDB" id="4QLJ"/>
    </source>
</evidence>
<evidence type="ECO:0007744" key="38">
    <source>
        <dbReference type="PDB" id="4QLK"/>
    </source>
</evidence>
<evidence type="ECO:0007744" key="39">
    <source>
        <dbReference type="PDB" id="4QLL"/>
    </source>
</evidence>
<evidence type="ECO:0007744" key="40">
    <source>
        <dbReference type="PDB" id="7BZM"/>
    </source>
</evidence>
<evidence type="ECO:0007829" key="41">
    <source>
        <dbReference type="PDB" id="3F5L"/>
    </source>
</evidence>
<evidence type="ECO:0007829" key="42">
    <source>
        <dbReference type="PDB" id="4QLL"/>
    </source>
</evidence>
<dbReference type="EC" id="3.2.1.21" evidence="5"/>
<dbReference type="EMBL" id="U28047">
    <property type="protein sequence ID" value="AAA84906.3"/>
    <property type="molecule type" value="mRNA"/>
</dbReference>
<dbReference type="EMBL" id="AC091670">
    <property type="protein sequence ID" value="AAX95519.1"/>
    <property type="molecule type" value="Genomic_DNA"/>
</dbReference>
<dbReference type="EMBL" id="AC133334">
    <property type="protein sequence ID" value="AAS07254.1"/>
    <property type="molecule type" value="Genomic_DNA"/>
</dbReference>
<dbReference type="EMBL" id="AC133334">
    <property type="protein sequence ID" value="AAS07255.1"/>
    <property type="status" value="ALT_SEQ"/>
    <property type="molecule type" value="Genomic_DNA"/>
</dbReference>
<dbReference type="EMBL" id="DP000009">
    <property type="protein sequence ID" value="ABF98423.1"/>
    <property type="molecule type" value="Genomic_DNA"/>
</dbReference>
<dbReference type="EMBL" id="DP000009">
    <property type="protein sequence ID" value="ABF98424.1"/>
    <property type="status" value="ALT_SEQ"/>
    <property type="molecule type" value="Genomic_DNA"/>
</dbReference>
<dbReference type="EMBL" id="DP000009">
    <property type="protein sequence ID" value="ABF98425.1"/>
    <property type="status" value="ALT_SEQ"/>
    <property type="molecule type" value="Genomic_DNA"/>
</dbReference>
<dbReference type="EMBL" id="DP000009">
    <property type="protein sequence ID" value="ABF98426.1"/>
    <property type="status" value="ALT_SEQ"/>
    <property type="molecule type" value="Genomic_DNA"/>
</dbReference>
<dbReference type="EMBL" id="AP008209">
    <property type="protein sequence ID" value="BAF12927.1"/>
    <property type="molecule type" value="Genomic_DNA"/>
</dbReference>
<dbReference type="EMBL" id="AP014959">
    <property type="protein sequence ID" value="BAS85953.1"/>
    <property type="molecule type" value="Genomic_DNA"/>
</dbReference>
<dbReference type="EMBL" id="AK100165">
    <property type="protein sequence ID" value="BAG94472.1"/>
    <property type="molecule type" value="mRNA"/>
</dbReference>
<dbReference type="PIR" id="T03296">
    <property type="entry name" value="T03296"/>
</dbReference>
<dbReference type="RefSeq" id="XP_015630897.1">
    <property type="nucleotide sequence ID" value="XM_015775411.1"/>
</dbReference>
<dbReference type="PDB" id="2RGL">
    <property type="method" value="X-ray"/>
    <property type="resolution" value="2.20 A"/>
    <property type="chains" value="A/B=29-504"/>
</dbReference>
<dbReference type="PDB" id="2RGM">
    <property type="method" value="X-ray"/>
    <property type="resolution" value="1.55 A"/>
    <property type="chains" value="A/B=29-504"/>
</dbReference>
<dbReference type="PDB" id="3AHT">
    <property type="method" value="X-ray"/>
    <property type="resolution" value="2.80 A"/>
    <property type="chains" value="A/B=29-504"/>
</dbReference>
<dbReference type="PDB" id="3AHV">
    <property type="method" value="X-ray"/>
    <property type="resolution" value="1.75 A"/>
    <property type="chains" value="A/B=29-504"/>
</dbReference>
<dbReference type="PDB" id="3F4V">
    <property type="method" value="X-ray"/>
    <property type="resolution" value="1.65 A"/>
    <property type="chains" value="A/B=29-504"/>
</dbReference>
<dbReference type="PDB" id="3F5J">
    <property type="method" value="X-ray"/>
    <property type="resolution" value="1.95 A"/>
    <property type="chains" value="A/B=29-504"/>
</dbReference>
<dbReference type="PDB" id="3F5K">
    <property type="method" value="X-ray"/>
    <property type="resolution" value="1.80 A"/>
    <property type="chains" value="A/B=29-504"/>
</dbReference>
<dbReference type="PDB" id="3F5L">
    <property type="method" value="X-ray"/>
    <property type="resolution" value="1.37 A"/>
    <property type="chains" value="A/B=29-504"/>
</dbReference>
<dbReference type="PDB" id="3SCN">
    <property type="method" value="X-ray"/>
    <property type="resolution" value="2.20 A"/>
    <property type="chains" value="A/B=29-504"/>
</dbReference>
<dbReference type="PDB" id="3SCO">
    <property type="method" value="X-ray"/>
    <property type="resolution" value="1.95 A"/>
    <property type="chains" value="A/B=29-504"/>
</dbReference>
<dbReference type="PDB" id="3SCP">
    <property type="method" value="X-ray"/>
    <property type="resolution" value="2.10 A"/>
    <property type="chains" value="A/B=29-504"/>
</dbReference>
<dbReference type="PDB" id="3SCQ">
    <property type="method" value="X-ray"/>
    <property type="resolution" value="2.10 A"/>
    <property type="chains" value="A/B=29-504"/>
</dbReference>
<dbReference type="PDB" id="3SCR">
    <property type="method" value="X-ray"/>
    <property type="resolution" value="1.80 A"/>
    <property type="chains" value="A/B=29-504"/>
</dbReference>
<dbReference type="PDB" id="3SCS">
    <property type="method" value="X-ray"/>
    <property type="resolution" value="1.85 A"/>
    <property type="chains" value="A/B=29-504"/>
</dbReference>
<dbReference type="PDB" id="3SCT">
    <property type="method" value="X-ray"/>
    <property type="resolution" value="1.60 A"/>
    <property type="chains" value="A/B=29-504"/>
</dbReference>
<dbReference type="PDB" id="3SCU">
    <property type="method" value="X-ray"/>
    <property type="resolution" value="1.58 A"/>
    <property type="chains" value="A/B=29-504"/>
</dbReference>
<dbReference type="PDB" id="3SCV">
    <property type="method" value="X-ray"/>
    <property type="resolution" value="2.11 A"/>
    <property type="chains" value="A/B=29-504"/>
</dbReference>
<dbReference type="PDB" id="3SCW">
    <property type="method" value="X-ray"/>
    <property type="resolution" value="1.90 A"/>
    <property type="chains" value="A/B=29-504"/>
</dbReference>
<dbReference type="PDB" id="4QLJ">
    <property type="method" value="X-ray"/>
    <property type="resolution" value="1.95 A"/>
    <property type="chains" value="A/B=29-504"/>
</dbReference>
<dbReference type="PDB" id="4QLK">
    <property type="method" value="X-ray"/>
    <property type="resolution" value="1.83 A"/>
    <property type="chains" value="A/B=29-504"/>
</dbReference>
<dbReference type="PDB" id="4QLL">
    <property type="method" value="X-ray"/>
    <property type="resolution" value="1.85 A"/>
    <property type="chains" value="A/B=29-504"/>
</dbReference>
<dbReference type="PDB" id="7BZM">
    <property type="method" value="X-ray"/>
    <property type="resolution" value="2.30 A"/>
    <property type="chains" value="A/B=29-504"/>
</dbReference>
<dbReference type="PDBsum" id="2RGL"/>
<dbReference type="PDBsum" id="2RGM"/>
<dbReference type="PDBsum" id="3AHT"/>
<dbReference type="PDBsum" id="3AHV"/>
<dbReference type="PDBsum" id="3F4V"/>
<dbReference type="PDBsum" id="3F5J"/>
<dbReference type="PDBsum" id="3F5K"/>
<dbReference type="PDBsum" id="3F5L"/>
<dbReference type="PDBsum" id="3SCN"/>
<dbReference type="PDBsum" id="3SCO"/>
<dbReference type="PDBsum" id="3SCP"/>
<dbReference type="PDBsum" id="3SCQ"/>
<dbReference type="PDBsum" id="3SCR"/>
<dbReference type="PDBsum" id="3SCS"/>
<dbReference type="PDBsum" id="3SCT"/>
<dbReference type="PDBsum" id="3SCU"/>
<dbReference type="PDBsum" id="3SCV"/>
<dbReference type="PDBsum" id="3SCW"/>
<dbReference type="PDBsum" id="4QLJ"/>
<dbReference type="PDBsum" id="4QLK"/>
<dbReference type="PDBsum" id="4QLL"/>
<dbReference type="PDBsum" id="7BZM"/>
<dbReference type="SMR" id="Q75I93"/>
<dbReference type="BioGRID" id="802878">
    <property type="interactions" value="1"/>
</dbReference>
<dbReference type="FunCoup" id="Q75I93">
    <property type="interactions" value="493"/>
</dbReference>
<dbReference type="STRING" id="39947.Q75I93"/>
<dbReference type="CAZy" id="GH1">
    <property type="family name" value="Glycoside Hydrolase Family 1"/>
</dbReference>
<dbReference type="GlyCosmos" id="Q75I93">
    <property type="glycosylation" value="2 sites, No reported glycans"/>
</dbReference>
<dbReference type="PaxDb" id="39947-Q75I93"/>
<dbReference type="EnsemblPlants" id="Os03t0703000-01">
    <property type="protein sequence ID" value="Os03t0703000-01"/>
    <property type="gene ID" value="Os03g0703000"/>
</dbReference>
<dbReference type="Gramene" id="Os03t0703000-01">
    <property type="protein sequence ID" value="Os03t0703000-01"/>
    <property type="gene ID" value="Os03g0703000"/>
</dbReference>
<dbReference type="KEGG" id="dosa:Os03g0703000"/>
<dbReference type="eggNOG" id="KOG0626">
    <property type="taxonomic scope" value="Eukaryota"/>
</dbReference>
<dbReference type="HOGENOM" id="CLU_001859_1_0_1"/>
<dbReference type="InParanoid" id="Q75I93"/>
<dbReference type="OMA" id="FFEYVNA"/>
<dbReference type="OrthoDB" id="65569at2759"/>
<dbReference type="BRENDA" id="3.2.1.21">
    <property type="organism ID" value="4460"/>
</dbReference>
<dbReference type="PlantReactome" id="R-OSA-1119284">
    <property type="pathway name" value="Coumarin biosynthesis (via 2-coumarate)"/>
</dbReference>
<dbReference type="SABIO-RK" id="Q75I93"/>
<dbReference type="EvolutionaryTrace" id="Q75I93"/>
<dbReference type="Proteomes" id="UP000000763">
    <property type="component" value="Chromosome 3"/>
</dbReference>
<dbReference type="Proteomes" id="UP000059680">
    <property type="component" value="Chromosome 3"/>
</dbReference>
<dbReference type="ExpressionAtlas" id="Q75I93">
    <property type="expression patterns" value="baseline and differential"/>
</dbReference>
<dbReference type="GO" id="GO:0005576">
    <property type="term" value="C:extracellular region"/>
    <property type="evidence" value="ECO:0007669"/>
    <property type="project" value="UniProtKB-SubCell"/>
</dbReference>
<dbReference type="GO" id="GO:0047668">
    <property type="term" value="F:amygdalin beta-glucosidase activity"/>
    <property type="evidence" value="ECO:0000314"/>
    <property type="project" value="UniProtKB"/>
</dbReference>
<dbReference type="GO" id="GO:0033907">
    <property type="term" value="F:beta-D-fucosidase activity"/>
    <property type="evidence" value="ECO:0000314"/>
    <property type="project" value="UniProtKB"/>
</dbReference>
<dbReference type="GO" id="GO:0004565">
    <property type="term" value="F:beta-galactosidase activity"/>
    <property type="evidence" value="ECO:0000314"/>
    <property type="project" value="UniProtKB"/>
</dbReference>
<dbReference type="GO" id="GO:0080083">
    <property type="term" value="F:beta-gentiobiose beta-glucosidase activity"/>
    <property type="evidence" value="ECO:0000314"/>
    <property type="project" value="UniProtKB"/>
</dbReference>
<dbReference type="GO" id="GO:0008422">
    <property type="term" value="F:beta-glucosidase activity"/>
    <property type="evidence" value="ECO:0000314"/>
    <property type="project" value="UniProtKB"/>
</dbReference>
<dbReference type="GO" id="GO:0047701">
    <property type="term" value="F:beta-L-arabinosidase activity"/>
    <property type="evidence" value="ECO:0000314"/>
    <property type="project" value="UniProtKB"/>
</dbReference>
<dbReference type="GO" id="GO:0004567">
    <property type="term" value="F:beta-mannosidase activity"/>
    <property type="evidence" value="ECO:0000314"/>
    <property type="project" value="UniProtKB"/>
</dbReference>
<dbReference type="GO" id="GO:0080079">
    <property type="term" value="F:cellobiose glucosidase activity"/>
    <property type="evidence" value="ECO:0000314"/>
    <property type="project" value="UniProtKB"/>
</dbReference>
<dbReference type="GO" id="GO:0042973">
    <property type="term" value="F:glucan endo-1,3-beta-D-glucosidase activity"/>
    <property type="evidence" value="ECO:0000314"/>
    <property type="project" value="UniProtKB"/>
</dbReference>
<dbReference type="GO" id="GO:0042803">
    <property type="term" value="F:protein homodimerization activity"/>
    <property type="evidence" value="ECO:0000353"/>
    <property type="project" value="UniProtKB"/>
</dbReference>
<dbReference type="GO" id="GO:0050224">
    <property type="term" value="F:prunasin beta-glucosidase activity"/>
    <property type="evidence" value="ECO:0000314"/>
    <property type="project" value="UniProtKB"/>
</dbReference>
<dbReference type="GO" id="GO:0005975">
    <property type="term" value="P:carbohydrate metabolic process"/>
    <property type="evidence" value="ECO:0007669"/>
    <property type="project" value="InterPro"/>
</dbReference>
<dbReference type="FunFam" id="3.20.20.80:FF:000041">
    <property type="entry name" value="Beta-glucosidase 7"/>
    <property type="match status" value="1"/>
</dbReference>
<dbReference type="Gene3D" id="3.20.20.80">
    <property type="entry name" value="Glycosidases"/>
    <property type="match status" value="1"/>
</dbReference>
<dbReference type="InterPro" id="IPR001360">
    <property type="entry name" value="Glyco_hydro_1"/>
</dbReference>
<dbReference type="InterPro" id="IPR017853">
    <property type="entry name" value="Glycoside_hydrolase_SF"/>
</dbReference>
<dbReference type="PANTHER" id="PTHR10353:SF77">
    <property type="entry name" value="BETA-GLUCOSIDASE 7"/>
    <property type="match status" value="1"/>
</dbReference>
<dbReference type="PANTHER" id="PTHR10353">
    <property type="entry name" value="GLYCOSYL HYDROLASE"/>
    <property type="match status" value="1"/>
</dbReference>
<dbReference type="Pfam" id="PF00232">
    <property type="entry name" value="Glyco_hydro_1"/>
    <property type="match status" value="1"/>
</dbReference>
<dbReference type="PRINTS" id="PR00131">
    <property type="entry name" value="GLHYDRLASE1"/>
</dbReference>
<dbReference type="SUPFAM" id="SSF51445">
    <property type="entry name" value="(Trans)glycosidases"/>
    <property type="match status" value="1"/>
</dbReference>
<comment type="function">
    <text evidence="5 6 7">Hydrolyzes p-nitrophenyl beta-D-glucoside, p-nitrophenyl beta-D-mannoside, p-nitrophenyl beta-D-galactoside, p-nitrophenyl beta-D-xyloside, p-nitrophenyl beta-D-fucoside, p-nitrophenyl beta-L-arabinoside, oligosaccharides, pyridoxine beta-D-glucoside and the cyanogenic glucosides amygdalin, prunasin and dhurrin. Possesses pyridoxine transglucosylation activity.</text>
</comment>
<comment type="catalytic activity">
    <reaction evidence="5">
        <text>Hydrolysis of terminal, non-reducing beta-D-glucosyl residues with release of beta-D-glucose.</text>
        <dbReference type="EC" id="3.2.1.21"/>
    </reaction>
</comment>
<comment type="biophysicochemical properties">
    <kinetics>
        <KM evidence="5 6 7">0.2 mM for p-nitrophenyl beta-D-glucoside (at pH 5.0)</KM>
        <KM evidence="5 6 7">0.23 mM for p-nitrophenyl beta-D-fucoside (at pH 5.0)</KM>
        <KM evidence="5 6 7">3.2 mM for p-nitrophenyl beta-D-galactoside (at pH 5.0)</KM>
        <KM evidence="5 6 7">1.3 mM for p-nitrophenyl beta-D-mannoside (at pH 5.0)</KM>
        <KM evidence="5 6 7">1.3 mM for p-nitrophenyl beta-D-xyloside (at pH 5.0)</KM>
        <KM evidence="5 6 7">1.2 mM for p-nitrophenyl beta-L-arabinoside (at pH 5.0)</KM>
        <KM evidence="5 6 7">0.78 mM for p-nitrophenyl beta-D-cellobioside (at pH 5.0)</KM>
        <KM evidence="5 6 7">22 mM for cellobiose (at pH 5.0)</KM>
        <KM evidence="5 6 7">0.22 mM for cellotriose (at pH 5.0)</KM>
        <KM evidence="5 6 7">0.28 mM for cellotetraose (at pH 5.0)</KM>
        <KM evidence="5 6 7">0.24 mM for cellopentaose (at pH 5.0)</KM>
        <KM evidence="5 6 7">0.22 mM for cellohexaose (at pH 5.0)</KM>
        <KM evidence="5 6 7">2.05 mM for laminaribiose (at pH 5.0)</KM>
        <KM evidence="5 6 7">1.92 mM for laminaritriose (at pH 5.0)</KM>
        <KM evidence="5 6 7">13.9 mM for sophorose (at pH 5.0)</KM>
        <KM evidence="5 6 7">38.3 mM for gentiobiose (at pH 5.0)</KM>
    </kinetics>
</comment>
<comment type="subunit">
    <text evidence="6">Homodimer.</text>
</comment>
<comment type="subcellular location">
    <subcellularLocation>
        <location evidence="13">Secreted</location>
    </subcellularLocation>
</comment>
<comment type="similarity">
    <text evidence="13">Belongs to the glycosyl hydrolase 1 family.</text>
</comment>
<comment type="sequence caution" evidence="13">
    <conflict type="erroneous gene model prediction">
        <sequence resource="EMBL-CDS" id="AAS07255"/>
    </conflict>
</comment>
<comment type="sequence caution" evidence="13">
    <conflict type="erroneous gene model prediction">
        <sequence resource="EMBL-CDS" id="ABF98424"/>
    </conflict>
</comment>
<comment type="sequence caution" evidence="13">
    <conflict type="erroneous gene model prediction">
        <sequence resource="EMBL-CDS" id="ABF98425"/>
    </conflict>
</comment>
<comment type="sequence caution" evidence="13">
    <conflict type="erroneous gene model prediction">
        <sequence resource="EMBL-CDS" id="ABF98426"/>
    </conflict>
</comment>